<accession>Q20YB4</accession>
<keyword id="KW-0030">Aminoacyl-tRNA synthetase</keyword>
<keyword id="KW-0067">ATP-binding</keyword>
<keyword id="KW-0963">Cytoplasm</keyword>
<keyword id="KW-0436">Ligase</keyword>
<keyword id="KW-0547">Nucleotide-binding</keyword>
<keyword id="KW-0648">Protein biosynthesis</keyword>
<dbReference type="EC" id="6.1.1.14" evidence="1"/>
<dbReference type="EMBL" id="CP000301">
    <property type="protein sequence ID" value="ABD89872.1"/>
    <property type="molecule type" value="Genomic_DNA"/>
</dbReference>
<dbReference type="SMR" id="Q20YB4"/>
<dbReference type="STRING" id="316056.RPC_4349"/>
<dbReference type="KEGG" id="rpc:RPC_4349"/>
<dbReference type="eggNOG" id="COG0752">
    <property type="taxonomic scope" value="Bacteria"/>
</dbReference>
<dbReference type="HOGENOM" id="CLU_057066_1_0_5"/>
<dbReference type="GO" id="GO:0005829">
    <property type="term" value="C:cytosol"/>
    <property type="evidence" value="ECO:0007669"/>
    <property type="project" value="TreeGrafter"/>
</dbReference>
<dbReference type="GO" id="GO:0005524">
    <property type="term" value="F:ATP binding"/>
    <property type="evidence" value="ECO:0007669"/>
    <property type="project" value="UniProtKB-UniRule"/>
</dbReference>
<dbReference type="GO" id="GO:0004820">
    <property type="term" value="F:glycine-tRNA ligase activity"/>
    <property type="evidence" value="ECO:0007669"/>
    <property type="project" value="UniProtKB-UniRule"/>
</dbReference>
<dbReference type="GO" id="GO:0006426">
    <property type="term" value="P:glycyl-tRNA aminoacylation"/>
    <property type="evidence" value="ECO:0007669"/>
    <property type="project" value="UniProtKB-UniRule"/>
</dbReference>
<dbReference type="CDD" id="cd00733">
    <property type="entry name" value="GlyRS_alpha_core"/>
    <property type="match status" value="1"/>
</dbReference>
<dbReference type="FunFam" id="3.30.930.10:FF:000006">
    <property type="entry name" value="Glycine--tRNA ligase alpha subunit"/>
    <property type="match status" value="1"/>
</dbReference>
<dbReference type="Gene3D" id="3.30.930.10">
    <property type="entry name" value="Bira Bifunctional Protein, Domain 2"/>
    <property type="match status" value="1"/>
</dbReference>
<dbReference type="Gene3D" id="1.20.58.180">
    <property type="entry name" value="Class II aaRS and biotin synthetases, domain 2"/>
    <property type="match status" value="1"/>
</dbReference>
<dbReference type="HAMAP" id="MF_00254">
    <property type="entry name" value="Gly_tRNA_synth_alpha"/>
    <property type="match status" value="1"/>
</dbReference>
<dbReference type="InterPro" id="IPR045864">
    <property type="entry name" value="aa-tRNA-synth_II/BPL/LPL"/>
</dbReference>
<dbReference type="InterPro" id="IPR006194">
    <property type="entry name" value="Gly-tRNA-synth_heterodimer"/>
</dbReference>
<dbReference type="InterPro" id="IPR002310">
    <property type="entry name" value="Gly-tRNA_ligase_asu"/>
</dbReference>
<dbReference type="NCBIfam" id="TIGR00388">
    <property type="entry name" value="glyQ"/>
    <property type="match status" value="1"/>
</dbReference>
<dbReference type="NCBIfam" id="NF006827">
    <property type="entry name" value="PRK09348.1"/>
    <property type="match status" value="1"/>
</dbReference>
<dbReference type="PANTHER" id="PTHR30075:SF2">
    <property type="entry name" value="GLYCINE--TRNA LIGASE, CHLOROPLASTIC_MITOCHONDRIAL 2"/>
    <property type="match status" value="1"/>
</dbReference>
<dbReference type="PANTHER" id="PTHR30075">
    <property type="entry name" value="GLYCYL-TRNA SYNTHETASE"/>
    <property type="match status" value="1"/>
</dbReference>
<dbReference type="Pfam" id="PF02091">
    <property type="entry name" value="tRNA-synt_2e"/>
    <property type="match status" value="1"/>
</dbReference>
<dbReference type="PRINTS" id="PR01044">
    <property type="entry name" value="TRNASYNTHGA"/>
</dbReference>
<dbReference type="SUPFAM" id="SSF55681">
    <property type="entry name" value="Class II aaRS and biotin synthetases"/>
    <property type="match status" value="1"/>
</dbReference>
<dbReference type="PROSITE" id="PS50861">
    <property type="entry name" value="AA_TRNA_LIGASE_II_GLYAB"/>
    <property type="match status" value="1"/>
</dbReference>
<evidence type="ECO:0000255" key="1">
    <source>
        <dbReference type="HAMAP-Rule" id="MF_00254"/>
    </source>
</evidence>
<evidence type="ECO:0000256" key="2">
    <source>
        <dbReference type="SAM" id="MobiDB-lite"/>
    </source>
</evidence>
<feature type="chain" id="PRO_1000047477" description="Glycine--tRNA ligase alpha subunit">
    <location>
        <begin position="1"/>
        <end position="318"/>
    </location>
</feature>
<feature type="region of interest" description="Disordered" evidence="2">
    <location>
        <begin position="298"/>
        <end position="318"/>
    </location>
</feature>
<feature type="compositionally biased region" description="Polar residues" evidence="2">
    <location>
        <begin position="300"/>
        <end position="309"/>
    </location>
</feature>
<organism>
    <name type="scientific">Rhodopseudomonas palustris (strain BisB18)</name>
    <dbReference type="NCBI Taxonomy" id="316056"/>
    <lineage>
        <taxon>Bacteria</taxon>
        <taxon>Pseudomonadati</taxon>
        <taxon>Pseudomonadota</taxon>
        <taxon>Alphaproteobacteria</taxon>
        <taxon>Hyphomicrobiales</taxon>
        <taxon>Nitrobacteraceae</taxon>
        <taxon>Rhodopseudomonas</taxon>
    </lineage>
</organism>
<name>SYGA_RHOPB</name>
<comment type="catalytic activity">
    <reaction evidence="1">
        <text>tRNA(Gly) + glycine + ATP = glycyl-tRNA(Gly) + AMP + diphosphate</text>
        <dbReference type="Rhea" id="RHEA:16013"/>
        <dbReference type="Rhea" id="RHEA-COMP:9664"/>
        <dbReference type="Rhea" id="RHEA-COMP:9683"/>
        <dbReference type="ChEBI" id="CHEBI:30616"/>
        <dbReference type="ChEBI" id="CHEBI:33019"/>
        <dbReference type="ChEBI" id="CHEBI:57305"/>
        <dbReference type="ChEBI" id="CHEBI:78442"/>
        <dbReference type="ChEBI" id="CHEBI:78522"/>
        <dbReference type="ChEBI" id="CHEBI:456215"/>
        <dbReference type="EC" id="6.1.1.14"/>
    </reaction>
</comment>
<comment type="subunit">
    <text evidence="1">Tetramer of two alpha and two beta subunits.</text>
</comment>
<comment type="subcellular location">
    <subcellularLocation>
        <location evidence="1">Cytoplasm</location>
    </subcellularLocation>
</comment>
<comment type="similarity">
    <text evidence="1">Belongs to the class-II aminoacyl-tRNA synthetase family.</text>
</comment>
<reference key="1">
    <citation type="submission" date="2006-03" db="EMBL/GenBank/DDBJ databases">
        <title>Complete sequence of Rhodopseudomonas palustris BisB18.</title>
        <authorList>
            <consortium name="US DOE Joint Genome Institute"/>
            <person name="Copeland A."/>
            <person name="Lucas S."/>
            <person name="Lapidus A."/>
            <person name="Barry K."/>
            <person name="Detter J.C."/>
            <person name="Glavina del Rio T."/>
            <person name="Hammon N."/>
            <person name="Israni S."/>
            <person name="Dalin E."/>
            <person name="Tice H."/>
            <person name="Pitluck S."/>
            <person name="Chain P."/>
            <person name="Malfatti S."/>
            <person name="Shin M."/>
            <person name="Vergez L."/>
            <person name="Schmutz J."/>
            <person name="Larimer F."/>
            <person name="Land M."/>
            <person name="Hauser L."/>
            <person name="Pelletier D.A."/>
            <person name="Kyrpides N."/>
            <person name="Anderson I."/>
            <person name="Oda Y."/>
            <person name="Harwood C.S."/>
            <person name="Richardson P."/>
        </authorList>
    </citation>
    <scope>NUCLEOTIDE SEQUENCE [LARGE SCALE GENOMIC DNA]</scope>
    <source>
        <strain>BisB18</strain>
    </source>
</reference>
<protein>
    <recommendedName>
        <fullName evidence="1">Glycine--tRNA ligase alpha subunit</fullName>
        <ecNumber evidence="1">6.1.1.14</ecNumber>
    </recommendedName>
    <alternativeName>
        <fullName evidence="1">Glycyl-tRNA synthetase alpha subunit</fullName>
        <shortName evidence="1">GlyRS</shortName>
    </alternativeName>
</protein>
<sequence length="318" mass="35849">MRPERSFQGLILALQRYWADYGCVILQPYDMEVGAGTFHPATTLRALGPKPWRAAYVQPSRRPKDGRYGENPNRLQHYYQFQVILKPSPPDIQELYLKSLAAIGVDSHLHDIRFVEDDWESPTLGAWGLGWECWCDGMEVSQFTYFQQVAGVECAPVAGELTYGLERLAMYVQGVDRVYDLNFNGRDGADKVTYGDVFLQAEKEYSRHNFEHSDAAMLFEQFKMAESACQKYLAAGWDSDKREAHLMALPAYDQCIKASHAFNLLDARGVISVTERQSYILRVRELAKACGAAWLHTEAGGSSPSTSRQGEAPRGESQ</sequence>
<gene>
    <name evidence="1" type="primary">glyQ</name>
    <name type="ordered locus">RPC_4349</name>
</gene>
<proteinExistence type="inferred from homology"/>